<name>METXS_MARN8</name>
<protein>
    <recommendedName>
        <fullName evidence="1">Homoserine O-succinyltransferase</fullName>
        <shortName evidence="1">HST</shortName>
        <ecNumber evidence="1">2.3.1.46</ecNumber>
    </recommendedName>
    <alternativeName>
        <fullName evidence="1">Homoserine transsuccinylase</fullName>
        <shortName evidence="1">HTS</shortName>
    </alternativeName>
</protein>
<keyword id="KW-0012">Acyltransferase</keyword>
<keyword id="KW-0028">Amino-acid biosynthesis</keyword>
<keyword id="KW-0963">Cytoplasm</keyword>
<keyword id="KW-0486">Methionine biosynthesis</keyword>
<keyword id="KW-0808">Transferase</keyword>
<gene>
    <name evidence="1" type="primary">metXS</name>
    <name type="ordered locus">Maqu_0532</name>
</gene>
<organism>
    <name type="scientific">Marinobacter nauticus (strain ATCC 700491 / DSM 11845 / VT8)</name>
    <name type="common">Marinobacter aquaeolei</name>
    <dbReference type="NCBI Taxonomy" id="351348"/>
    <lineage>
        <taxon>Bacteria</taxon>
        <taxon>Pseudomonadati</taxon>
        <taxon>Pseudomonadota</taxon>
        <taxon>Gammaproteobacteria</taxon>
        <taxon>Pseudomonadales</taxon>
        <taxon>Marinobacteraceae</taxon>
        <taxon>Marinobacter</taxon>
    </lineage>
</organism>
<proteinExistence type="inferred from homology"/>
<dbReference type="EC" id="2.3.1.46" evidence="1"/>
<dbReference type="EMBL" id="CP000514">
    <property type="protein sequence ID" value="ABM17633.1"/>
    <property type="molecule type" value="Genomic_DNA"/>
</dbReference>
<dbReference type="RefSeq" id="WP_011784077.1">
    <property type="nucleotide sequence ID" value="NC_008740.1"/>
</dbReference>
<dbReference type="SMR" id="A1TY14"/>
<dbReference type="STRING" id="351348.Maqu_0532"/>
<dbReference type="ESTHER" id="marav-metx">
    <property type="family name" value="Homoserine_transacetylase"/>
</dbReference>
<dbReference type="GeneID" id="31819971"/>
<dbReference type="KEGG" id="maq:Maqu_0532"/>
<dbReference type="eggNOG" id="COG2021">
    <property type="taxonomic scope" value="Bacteria"/>
</dbReference>
<dbReference type="HOGENOM" id="CLU_028760_1_2_6"/>
<dbReference type="OrthoDB" id="9800754at2"/>
<dbReference type="UniPathway" id="UPA00051">
    <property type="reaction ID" value="UER00075"/>
</dbReference>
<dbReference type="Proteomes" id="UP000000998">
    <property type="component" value="Chromosome"/>
</dbReference>
<dbReference type="GO" id="GO:0005737">
    <property type="term" value="C:cytoplasm"/>
    <property type="evidence" value="ECO:0007669"/>
    <property type="project" value="UniProtKB-SubCell"/>
</dbReference>
<dbReference type="GO" id="GO:0004414">
    <property type="term" value="F:homoserine O-acetyltransferase activity"/>
    <property type="evidence" value="ECO:0007669"/>
    <property type="project" value="TreeGrafter"/>
</dbReference>
<dbReference type="GO" id="GO:0008899">
    <property type="term" value="F:homoserine O-succinyltransferase activity"/>
    <property type="evidence" value="ECO:0007669"/>
    <property type="project" value="UniProtKB-UniRule"/>
</dbReference>
<dbReference type="GO" id="GO:0009092">
    <property type="term" value="P:homoserine metabolic process"/>
    <property type="evidence" value="ECO:0007669"/>
    <property type="project" value="TreeGrafter"/>
</dbReference>
<dbReference type="GO" id="GO:0009086">
    <property type="term" value="P:methionine biosynthetic process"/>
    <property type="evidence" value="ECO:0007669"/>
    <property type="project" value="UniProtKB-UniRule"/>
</dbReference>
<dbReference type="FunFam" id="1.10.1740.110:FF:000001">
    <property type="entry name" value="Homoserine O-acetyltransferase"/>
    <property type="match status" value="1"/>
</dbReference>
<dbReference type="Gene3D" id="1.10.1740.110">
    <property type="match status" value="1"/>
</dbReference>
<dbReference type="Gene3D" id="3.40.50.1820">
    <property type="entry name" value="alpha/beta hydrolase"/>
    <property type="match status" value="1"/>
</dbReference>
<dbReference type="HAMAP" id="MF_00296">
    <property type="entry name" value="MetX_acyltransf"/>
    <property type="match status" value="1"/>
</dbReference>
<dbReference type="InterPro" id="IPR000073">
    <property type="entry name" value="AB_hydrolase_1"/>
</dbReference>
<dbReference type="InterPro" id="IPR029058">
    <property type="entry name" value="AB_hydrolase_fold"/>
</dbReference>
<dbReference type="InterPro" id="IPR008220">
    <property type="entry name" value="HAT_MetX-like"/>
</dbReference>
<dbReference type="NCBIfam" id="TIGR01392">
    <property type="entry name" value="homoserO_Ac_trn"/>
    <property type="match status" value="1"/>
</dbReference>
<dbReference type="NCBIfam" id="NF001209">
    <property type="entry name" value="PRK00175.1"/>
    <property type="match status" value="1"/>
</dbReference>
<dbReference type="PANTHER" id="PTHR32268">
    <property type="entry name" value="HOMOSERINE O-ACETYLTRANSFERASE"/>
    <property type="match status" value="1"/>
</dbReference>
<dbReference type="PANTHER" id="PTHR32268:SF11">
    <property type="entry name" value="HOMOSERINE O-ACETYLTRANSFERASE"/>
    <property type="match status" value="1"/>
</dbReference>
<dbReference type="Pfam" id="PF00561">
    <property type="entry name" value="Abhydrolase_1"/>
    <property type="match status" value="1"/>
</dbReference>
<dbReference type="PIRSF" id="PIRSF000443">
    <property type="entry name" value="Homoser_Ac_trans"/>
    <property type="match status" value="1"/>
</dbReference>
<dbReference type="SUPFAM" id="SSF53474">
    <property type="entry name" value="alpha/beta-Hydrolases"/>
    <property type="match status" value="1"/>
</dbReference>
<accession>A1TY14</accession>
<comment type="function">
    <text evidence="1">Transfers a succinyl group from succinyl-CoA to L-homoserine, forming succinyl-L-homoserine.</text>
</comment>
<comment type="catalytic activity">
    <reaction evidence="1">
        <text>L-homoserine + succinyl-CoA = O-succinyl-L-homoserine + CoA</text>
        <dbReference type="Rhea" id="RHEA:22008"/>
        <dbReference type="ChEBI" id="CHEBI:57287"/>
        <dbReference type="ChEBI" id="CHEBI:57292"/>
        <dbReference type="ChEBI" id="CHEBI:57476"/>
        <dbReference type="ChEBI" id="CHEBI:57661"/>
        <dbReference type="EC" id="2.3.1.46"/>
    </reaction>
</comment>
<comment type="pathway">
    <text evidence="1">Amino-acid biosynthesis; L-methionine biosynthesis via de novo pathway; O-succinyl-L-homoserine from L-homoserine: step 1/1.</text>
</comment>
<comment type="subunit">
    <text evidence="1">Homodimer.</text>
</comment>
<comment type="subcellular location">
    <subcellularLocation>
        <location evidence="1">Cytoplasm</location>
    </subcellularLocation>
</comment>
<comment type="similarity">
    <text evidence="1">Belongs to the AB hydrolase superfamily. MetX family.</text>
</comment>
<reference key="1">
    <citation type="journal article" date="2011" name="Appl. Environ. Microbiol.">
        <title>Genomic potential of Marinobacter aquaeolei, a biogeochemical 'opportunitroph'.</title>
        <authorList>
            <person name="Singer E."/>
            <person name="Webb E.A."/>
            <person name="Nelson W.C."/>
            <person name="Heidelberg J.F."/>
            <person name="Ivanova N."/>
            <person name="Pati A."/>
            <person name="Edwards K.J."/>
        </authorList>
    </citation>
    <scope>NUCLEOTIDE SEQUENCE [LARGE SCALE GENOMIC DNA]</scope>
    <source>
        <strain>ATCC 700491 / DSM 11845 / VT8</strain>
    </source>
</reference>
<evidence type="ECO:0000255" key="1">
    <source>
        <dbReference type="HAMAP-Rule" id="MF_00296"/>
    </source>
</evidence>
<sequence>MPDSLPSDSVGLVSPKTIHFDKPLELACGQSLESYDLVVETYGKLNADASNAVLICHALSGHHHAAGYHSLDDRKPGWWDSCIGPGKPIDTNRFFVVSLNNLGGCHGSTGPNSNNPETGKPYGPDFPVVTVADWVASQARLADHLGIQQWAAVVGGSLGGMQALQWSLDYPDRLRHSVVIASTPRLTAQNIAFNEVARQAITSDREFFEGRYYDENLVPKRGLMLARMVGHITYLSDASMGEKFGRELREEAYKFGFDAEFQVESYLRYQGERFSETFDANTYLLMTRALDYFDPAYDFGGDLSKALAPAQCEYLVLSFSTDWRFSPARSEEMVNAMISARKRVSYAEIDAPWGHDAFLIPTPRYTDIFTAYMDRVAREVGA</sequence>
<feature type="chain" id="PRO_1000021882" description="Homoserine O-succinyltransferase">
    <location>
        <begin position="1"/>
        <end position="382"/>
    </location>
</feature>
<feature type="domain" description="AB hydrolase-1" evidence="1">
    <location>
        <begin position="51"/>
        <end position="359"/>
    </location>
</feature>
<feature type="active site" description="Nucleophile" evidence="1">
    <location>
        <position position="157"/>
    </location>
</feature>
<feature type="active site" evidence="1">
    <location>
        <position position="322"/>
    </location>
</feature>
<feature type="active site" evidence="1">
    <location>
        <position position="355"/>
    </location>
</feature>
<feature type="binding site" evidence="1">
    <location>
        <position position="227"/>
    </location>
    <ligand>
        <name>substrate</name>
    </ligand>
</feature>
<feature type="binding site" evidence="1">
    <location>
        <position position="356"/>
    </location>
    <ligand>
        <name>substrate</name>
    </ligand>
</feature>
<feature type="site" description="Important for acyl-CoA specificity" evidence="1">
    <location>
        <position position="324"/>
    </location>
</feature>